<dbReference type="EMBL" id="BT021805">
    <property type="protein sequence ID" value="AAX46652.1"/>
    <property type="molecule type" value="mRNA"/>
</dbReference>
<dbReference type="EMBL" id="BC119984">
    <property type="protein sequence ID" value="AAI19985.1"/>
    <property type="molecule type" value="mRNA"/>
</dbReference>
<dbReference type="RefSeq" id="NP_001019650.1">
    <property type="nucleotide sequence ID" value="NM_001024479.2"/>
</dbReference>
<dbReference type="RefSeq" id="XP_005214620.1">
    <property type="nucleotide sequence ID" value="XM_005214563.5"/>
</dbReference>
<dbReference type="SMR" id="Q58CZ2"/>
<dbReference type="FunCoup" id="Q58CZ2">
    <property type="interactions" value="1521"/>
</dbReference>
<dbReference type="STRING" id="9913.ENSBTAP00000042405"/>
<dbReference type="PaxDb" id="9913-ENSBTAP00000042405"/>
<dbReference type="GeneID" id="505807"/>
<dbReference type="KEGG" id="bta:505807"/>
<dbReference type="CTD" id="55251"/>
<dbReference type="eggNOG" id="KOG1661">
    <property type="taxonomic scope" value="Eukaryota"/>
</dbReference>
<dbReference type="HOGENOM" id="CLU_029295_0_0_1"/>
<dbReference type="InParanoid" id="Q58CZ2"/>
<dbReference type="OrthoDB" id="10257972at2759"/>
<dbReference type="TreeFam" id="TF329329"/>
<dbReference type="Proteomes" id="UP000009136">
    <property type="component" value="Unplaced"/>
</dbReference>
<dbReference type="GO" id="GO:0005737">
    <property type="term" value="C:cytoplasm"/>
    <property type="evidence" value="ECO:0000318"/>
    <property type="project" value="GO_Central"/>
</dbReference>
<dbReference type="GO" id="GO:0004719">
    <property type="term" value="F:protein-L-isoaspartate (D-aspartate) O-methyltransferase activity"/>
    <property type="evidence" value="ECO:0000318"/>
    <property type="project" value="GO_Central"/>
</dbReference>
<dbReference type="GO" id="GO:0036211">
    <property type="term" value="P:protein modification process"/>
    <property type="evidence" value="ECO:0007669"/>
    <property type="project" value="InterPro"/>
</dbReference>
<dbReference type="FunFam" id="3.40.50.150:FF:000015">
    <property type="entry name" value="Protein-L-isoaspartate (D-aspartate) O-methyltransferase domain-containing 1"/>
    <property type="match status" value="1"/>
</dbReference>
<dbReference type="Gene3D" id="3.40.50.150">
    <property type="entry name" value="Vaccinia Virus protein VP39"/>
    <property type="match status" value="1"/>
</dbReference>
<dbReference type="InterPro" id="IPR000682">
    <property type="entry name" value="PCMT"/>
</dbReference>
<dbReference type="InterPro" id="IPR029063">
    <property type="entry name" value="SAM-dependent_MTases_sf"/>
</dbReference>
<dbReference type="PANTHER" id="PTHR11579">
    <property type="entry name" value="PROTEIN-L-ISOASPARTATE O-METHYLTRANSFERASE"/>
    <property type="match status" value="1"/>
</dbReference>
<dbReference type="PANTHER" id="PTHR11579:SF2">
    <property type="entry name" value="PROTEIN-L-ISOASPARTATE O-METHYLTRANSFERASE DOMAIN-CONTAINING PROTEIN 2"/>
    <property type="match status" value="1"/>
</dbReference>
<dbReference type="Pfam" id="PF01135">
    <property type="entry name" value="PCMT"/>
    <property type="match status" value="1"/>
</dbReference>
<dbReference type="SUPFAM" id="SSF53335">
    <property type="entry name" value="S-adenosyl-L-methionine-dependent methyltransferases"/>
    <property type="match status" value="1"/>
</dbReference>
<sequence>MGGAVSAGEDNDELIDNLKEAQYIRSELVEQAFRAIDRADYYLEEFKENAYKDLAWKHGNIHLSAPCIYSEVMEALDLQPGLSFLNLGSGTGYLSSMVGLILGPFGVNHGVELHSDVTEYAKQKLDFFIRTSDSFDKFDFCEPSFVTGNCLEISPDCSQYDRVYCGAGVQKEHEEYMKSLLKVGGILVMPLEEKLTKITRTGPSAWETKKILAVSFAPLIQPCQSESGKSRLVQLPPLAVRSLQDLARIAIRGTIKKVIHQEAVNKNGNGLKNTPRFKRRRVRRRRLETIVFLDKEVFASRISNPSDDNSSGDLEEERREEEATTPPDAKPEPPVNFLREKVLSLPLPDPLKYYLLYYREK</sequence>
<protein>
    <recommendedName>
        <fullName>Protein-L-isoaspartate O-methyltransferase domain-containing protein 2</fullName>
    </recommendedName>
</protein>
<reference key="1">
    <citation type="journal article" date="2005" name="BMC Genomics">
        <title>Characterization of 954 bovine full-CDS cDNA sequences.</title>
        <authorList>
            <person name="Harhay G.P."/>
            <person name="Sonstegard T.S."/>
            <person name="Keele J.W."/>
            <person name="Heaton M.P."/>
            <person name="Clawson M.L."/>
            <person name="Snelling W.M."/>
            <person name="Wiedmann R.T."/>
            <person name="Van Tassell C.P."/>
            <person name="Smith T.P.L."/>
        </authorList>
    </citation>
    <scope>NUCLEOTIDE SEQUENCE [LARGE SCALE MRNA]</scope>
</reference>
<reference key="2">
    <citation type="submission" date="2006-08" db="EMBL/GenBank/DDBJ databases">
        <authorList>
            <consortium name="NIH - Mammalian Gene Collection (MGC) project"/>
        </authorList>
    </citation>
    <scope>NUCLEOTIDE SEQUENCE [LARGE SCALE MRNA]</scope>
    <source>
        <strain>Hereford</strain>
        <tissue>Fetal skin</tissue>
    </source>
</reference>
<evidence type="ECO:0000250" key="1">
    <source>
        <dbReference type="UniProtKB" id="P22061"/>
    </source>
</evidence>
<evidence type="ECO:0000250" key="2">
    <source>
        <dbReference type="UniProtKB" id="Q27869"/>
    </source>
</evidence>
<evidence type="ECO:0000250" key="3">
    <source>
        <dbReference type="UniProtKB" id="Q96MG8"/>
    </source>
</evidence>
<evidence type="ECO:0000255" key="4"/>
<evidence type="ECO:0000256" key="5">
    <source>
        <dbReference type="SAM" id="MobiDB-lite"/>
    </source>
</evidence>
<evidence type="ECO:0000305" key="6"/>
<feature type="initiator methionine" description="Removed" evidence="4">
    <location>
        <position position="1"/>
    </location>
</feature>
<feature type="chain" id="PRO_0000244564" description="Protein-L-isoaspartate O-methyltransferase domain-containing protein 2">
    <location>
        <begin position="2"/>
        <end position="361"/>
    </location>
</feature>
<feature type="region of interest" description="AdoMet binding motif" evidence="3">
    <location>
        <begin position="85"/>
        <end position="94"/>
    </location>
</feature>
<feature type="region of interest" description="AdoMet binding motif" evidence="3">
    <location>
        <begin position="160"/>
        <end position="164"/>
    </location>
</feature>
<feature type="region of interest" description="AdoMet binding motif" evidence="3">
    <location>
        <begin position="181"/>
        <end position="191"/>
    </location>
</feature>
<feature type="region of interest" description="BC-box" evidence="3">
    <location>
        <begin position="240"/>
        <end position="250"/>
    </location>
</feature>
<feature type="region of interest" description="Disordered" evidence="5">
    <location>
        <begin position="303"/>
        <end position="335"/>
    </location>
</feature>
<feature type="region of interest" description="CUL-box" evidence="3">
    <location>
        <begin position="345"/>
        <end position="348"/>
    </location>
</feature>
<feature type="compositionally biased region" description="Polar residues" evidence="5">
    <location>
        <begin position="303"/>
        <end position="312"/>
    </location>
</feature>
<feature type="active site" evidence="2">
    <location>
        <position position="64"/>
    </location>
</feature>
<feature type="lipid moiety-binding region" description="N-myristoyl glycine" evidence="4">
    <location>
        <position position="2"/>
    </location>
</feature>
<gene>
    <name type="primary">PCMTD2</name>
</gene>
<organism>
    <name type="scientific">Bos taurus</name>
    <name type="common">Bovine</name>
    <dbReference type="NCBI Taxonomy" id="9913"/>
    <lineage>
        <taxon>Eukaryota</taxon>
        <taxon>Metazoa</taxon>
        <taxon>Chordata</taxon>
        <taxon>Craniata</taxon>
        <taxon>Vertebrata</taxon>
        <taxon>Euteleostomi</taxon>
        <taxon>Mammalia</taxon>
        <taxon>Eutheria</taxon>
        <taxon>Laurasiatheria</taxon>
        <taxon>Artiodactyla</taxon>
        <taxon>Ruminantia</taxon>
        <taxon>Pecora</taxon>
        <taxon>Bovidae</taxon>
        <taxon>Bovinae</taxon>
        <taxon>Bos</taxon>
    </lineage>
</organism>
<proteinExistence type="evidence at transcript level"/>
<keyword id="KW-0963">Cytoplasm</keyword>
<keyword id="KW-0449">Lipoprotein</keyword>
<keyword id="KW-0519">Myristate</keyword>
<keyword id="KW-1185">Reference proteome</keyword>
<name>PCMD2_BOVIN</name>
<comment type="function">
    <text evidence="3">May act as a substrate recognition component of an ECS (Elongin BC-CUL5-SOCS-box protein) E3 ubiquitin ligase complex which mediates the ubiquitination and subsequent proteasomal degradation of target proteins. May bind to the methyltransferase cofactor S-adenosylmethionine (AdoMet) via the N-terminal AdoMet binding motif, but probably does not display methyltransferase activity.</text>
</comment>
<comment type="subcellular location">
    <subcellularLocation>
        <location evidence="1">Cytoplasm</location>
    </subcellularLocation>
</comment>
<comment type="domain">
    <text evidence="3">At its N-terminus, contains L-isoaspartate and S-adenosylmethionine (AdoMet) binding motifs. Also contains an extended SOCS box motif, where the Cul-box is separated from the BC-box by ~90 residues, within its C-terminus.</text>
</comment>
<comment type="similarity">
    <text evidence="6">Belongs to the methyltransferase superfamily. L-isoaspartyl/D-aspartyl protein methyltransferase family.</text>
</comment>
<comment type="caution">
    <text evidence="3">Although the active site residue Ser is conserved, appears to lack catalytic activity in vitro.</text>
</comment>
<accession>Q58CZ2</accession>
<accession>Q0VCV2</accession>